<evidence type="ECO:0000250" key="1">
    <source>
        <dbReference type="UniProtKB" id="P82428"/>
    </source>
</evidence>
<evidence type="ECO:0000303" key="2">
    <source>
    </source>
</evidence>
<evidence type="ECO:0000303" key="3">
    <source>
    </source>
</evidence>
<evidence type="ECO:0000305" key="4"/>
<evidence type="ECO:0000305" key="5">
    <source>
    </source>
</evidence>
<comment type="function">
    <text evidence="1">Has activity against Gram-positive bacteria. Has insecticidal and hemolytic activities. May act by disrupting the integrity of the bacterial cell membrane.</text>
</comment>
<comment type="subcellular location">
    <subcellularLocation>
        <location evidence="5">Secreted</location>
    </subcellularLocation>
    <subcellularLocation>
        <location evidence="4">Target cell membrane</location>
    </subcellularLocation>
</comment>
<comment type="tissue specificity">
    <text evidence="5">Expressed by the venom gland.</text>
</comment>
<comment type="similarity">
    <text evidence="4">Belongs to the non-disulfide-bridged peptide (NDBP) superfamily. Medium-length antimicrobial peptide (group 3) family. Ponericin-W subfamily.</text>
</comment>
<proteinExistence type="evidence at protein level"/>
<name>WTX1A_NEOIV</name>
<accession>P0DSM3</accession>
<sequence length="20" mass="2045">FIGAALGALTAIPSIIKLFK</sequence>
<reference key="1">
    <citation type="journal article" date="2014" name="Toxicon">
        <title>Diversity of peptide toxins from stinging ant venoms.</title>
        <authorList>
            <person name="Aili S.R."/>
            <person name="Touchard A."/>
            <person name="Escoubas P."/>
            <person name="Padula M.P."/>
            <person name="Orivel J."/>
            <person name="Dejean A."/>
            <person name="Nicholson G.M."/>
        </authorList>
    </citation>
    <scope>REVIEW</scope>
    <scope>PROTEIN SEQUENCE</scope>
    <scope>AMIDATION AT LYS-20</scope>
</reference>
<reference key="2">
    <citation type="journal article" date="2016" name="Toxins">
        <title>The biochemical toxin arsenal from ant venoms.</title>
        <authorList>
            <person name="Touchard A."/>
            <person name="Aili S.R."/>
            <person name="Fox E.G."/>
            <person name="Escoubas P."/>
            <person name="Orivel J."/>
            <person name="Nicholson G.M."/>
            <person name="Dejean A."/>
        </authorList>
    </citation>
    <scope>REVIEW</scope>
    <scope>NOMENCLATURE</scope>
</reference>
<keyword id="KW-0027">Amidation</keyword>
<keyword id="KW-0044">Antibiotic</keyword>
<keyword id="KW-0929">Antimicrobial</keyword>
<keyword id="KW-0903">Direct protein sequencing</keyword>
<keyword id="KW-0472">Membrane</keyword>
<keyword id="KW-0964">Secreted</keyword>
<keyword id="KW-1052">Target cell membrane</keyword>
<keyword id="KW-1053">Target membrane</keyword>
<keyword id="KW-0800">Toxin</keyword>
<protein>
    <recommendedName>
        <fullName evidence="3">U1-poneritoxin-Ni1a</fullName>
        <shortName evidence="3">U1-PONTX-Ni1a</shortName>
    </recommendedName>
    <alternativeName>
        <fullName evidence="4">Poneratoxin</fullName>
    </alternativeName>
    <alternativeName>
        <fullName evidence="2">Ponericin Pi II1</fullName>
    </alternativeName>
</protein>
<organism>
    <name type="scientific">Neoponera inversa</name>
    <name type="common">Ant</name>
    <name type="synonym">Ponera inversa</name>
    <dbReference type="NCBI Taxonomy" id="264722"/>
    <lineage>
        <taxon>Eukaryota</taxon>
        <taxon>Metazoa</taxon>
        <taxon>Ecdysozoa</taxon>
        <taxon>Arthropoda</taxon>
        <taxon>Hexapoda</taxon>
        <taxon>Insecta</taxon>
        <taxon>Pterygota</taxon>
        <taxon>Neoptera</taxon>
        <taxon>Endopterygota</taxon>
        <taxon>Hymenoptera</taxon>
        <taxon>Apocrita</taxon>
        <taxon>Aculeata</taxon>
        <taxon>Formicoidea</taxon>
        <taxon>Formicidae</taxon>
        <taxon>Ponerinae</taxon>
        <taxon>Ponerini</taxon>
        <taxon>Neoponera</taxon>
    </lineage>
</organism>
<feature type="peptide" id="PRO_0000447118" description="U1-poneritoxin-Ni1a" evidence="5">
    <location>
        <begin position="1"/>
        <end position="20"/>
    </location>
</feature>
<feature type="modified residue" description="Lysine amide" evidence="5">
    <location>
        <position position="20"/>
    </location>
</feature>
<dbReference type="GO" id="GO:0005576">
    <property type="term" value="C:extracellular region"/>
    <property type="evidence" value="ECO:0007669"/>
    <property type="project" value="UniProtKB-SubCell"/>
</dbReference>
<dbReference type="GO" id="GO:0016020">
    <property type="term" value="C:membrane"/>
    <property type="evidence" value="ECO:0007669"/>
    <property type="project" value="UniProtKB-KW"/>
</dbReference>
<dbReference type="GO" id="GO:0044218">
    <property type="term" value="C:other organism cell membrane"/>
    <property type="evidence" value="ECO:0007669"/>
    <property type="project" value="UniProtKB-KW"/>
</dbReference>
<dbReference type="GO" id="GO:0090729">
    <property type="term" value="F:toxin activity"/>
    <property type="evidence" value="ECO:0007669"/>
    <property type="project" value="UniProtKB-KW"/>
</dbReference>
<dbReference type="GO" id="GO:0042742">
    <property type="term" value="P:defense response to bacterium"/>
    <property type="evidence" value="ECO:0007669"/>
    <property type="project" value="UniProtKB-KW"/>
</dbReference>